<name>PYRE_MALP2</name>
<feature type="chain" id="PRO_0000110711" description="Orotate phosphoribosyltransferase">
    <location>
        <begin position="1"/>
        <end position="209"/>
    </location>
</feature>
<feature type="binding site" evidence="1">
    <location>
        <position position="98"/>
    </location>
    <ligand>
        <name>5-phospho-alpha-D-ribose 1-diphosphate</name>
        <dbReference type="ChEBI" id="CHEBI:58017"/>
        <note>ligand shared between dimeric partners</note>
    </ligand>
</feature>
<feature type="binding site" evidence="1">
    <location>
        <position position="102"/>
    </location>
    <ligand>
        <name>5-phospho-alpha-D-ribose 1-diphosphate</name>
        <dbReference type="ChEBI" id="CHEBI:58017"/>
        <note>ligand shared between dimeric partners</note>
    </ligand>
</feature>
<feature type="binding site" evidence="1">
    <location>
        <position position="104"/>
    </location>
    <ligand>
        <name>5-phospho-alpha-D-ribose 1-diphosphate</name>
        <dbReference type="ChEBI" id="CHEBI:58017"/>
        <note>ligand shared between dimeric partners</note>
    </ligand>
</feature>
<feature type="binding site" description="in other chain" evidence="1">
    <location>
        <begin position="124"/>
        <end position="132"/>
    </location>
    <ligand>
        <name>5-phospho-alpha-D-ribose 1-diphosphate</name>
        <dbReference type="ChEBI" id="CHEBI:58017"/>
        <note>ligand shared between dimeric partners</note>
    </ligand>
</feature>
<feature type="binding site" evidence="1">
    <location>
        <position position="128"/>
    </location>
    <ligand>
        <name>orotate</name>
        <dbReference type="ChEBI" id="CHEBI:30839"/>
    </ligand>
</feature>
<comment type="function">
    <text evidence="1">Catalyzes the transfer of a ribosyl phosphate group from 5-phosphoribose 1-diphosphate to orotate, leading to the formation of orotidine monophosphate (OMP).</text>
</comment>
<comment type="catalytic activity">
    <reaction evidence="1">
        <text>orotidine 5'-phosphate + diphosphate = orotate + 5-phospho-alpha-D-ribose 1-diphosphate</text>
        <dbReference type="Rhea" id="RHEA:10380"/>
        <dbReference type="ChEBI" id="CHEBI:30839"/>
        <dbReference type="ChEBI" id="CHEBI:33019"/>
        <dbReference type="ChEBI" id="CHEBI:57538"/>
        <dbReference type="ChEBI" id="CHEBI:58017"/>
        <dbReference type="EC" id="2.4.2.10"/>
    </reaction>
</comment>
<comment type="cofactor">
    <cofactor evidence="1">
        <name>Mg(2+)</name>
        <dbReference type="ChEBI" id="CHEBI:18420"/>
    </cofactor>
</comment>
<comment type="pathway">
    <text evidence="1">Pyrimidine metabolism; UMP biosynthesis via de novo pathway; UMP from orotate: step 1/2.</text>
</comment>
<comment type="subunit">
    <text evidence="1">Homodimer.</text>
</comment>
<comment type="similarity">
    <text evidence="1">Belongs to the purine/pyrimidine phosphoribosyltransferase family. PyrE subfamily.</text>
</comment>
<gene>
    <name evidence="1" type="primary">pyrE</name>
    <name type="ordered locus">MYPE7840</name>
</gene>
<evidence type="ECO:0000255" key="1">
    <source>
        <dbReference type="HAMAP-Rule" id="MF_01208"/>
    </source>
</evidence>
<sequence>MSIENNIIKSLLEIKAIEVRKDKEKWFTWTSGIKSPIYCDNRLTISYPKVRNEIALSFKELIDTNFKDVQVIAGTATAGIPHAAWVSSLMNLPMVYVRNSSKQHGKTNQIEGLITKGSNVVIIEDLISTGKSSINVARCLREHGVNVLGIVAIFSYNLEIAKDAFMQENIKLFSLSNYDELINYMNEINQLNNNENQLLIDWRNGLNNK</sequence>
<dbReference type="EC" id="2.4.2.10" evidence="1"/>
<dbReference type="EMBL" id="BA000026">
    <property type="protein sequence ID" value="BAC44577.1"/>
    <property type="molecule type" value="Genomic_DNA"/>
</dbReference>
<dbReference type="RefSeq" id="WP_011077606.1">
    <property type="nucleotide sequence ID" value="NC_004432.1"/>
</dbReference>
<dbReference type="SMR" id="Q8EUY4"/>
<dbReference type="FunCoup" id="Q8EUY4">
    <property type="interactions" value="90"/>
</dbReference>
<dbReference type="STRING" id="272633.gene:10731906"/>
<dbReference type="KEGG" id="mpe:MYPE7840"/>
<dbReference type="eggNOG" id="COG0461">
    <property type="taxonomic scope" value="Bacteria"/>
</dbReference>
<dbReference type="HOGENOM" id="CLU_074878_1_1_14"/>
<dbReference type="InParanoid" id="Q8EUY4"/>
<dbReference type="UniPathway" id="UPA00070">
    <property type="reaction ID" value="UER00119"/>
</dbReference>
<dbReference type="Proteomes" id="UP000002522">
    <property type="component" value="Chromosome"/>
</dbReference>
<dbReference type="GO" id="GO:0000287">
    <property type="term" value="F:magnesium ion binding"/>
    <property type="evidence" value="ECO:0007669"/>
    <property type="project" value="UniProtKB-UniRule"/>
</dbReference>
<dbReference type="GO" id="GO:0004588">
    <property type="term" value="F:orotate phosphoribosyltransferase activity"/>
    <property type="evidence" value="ECO:0007669"/>
    <property type="project" value="UniProtKB-UniRule"/>
</dbReference>
<dbReference type="GO" id="GO:0044205">
    <property type="term" value="P:'de novo' UMP biosynthetic process"/>
    <property type="evidence" value="ECO:0007669"/>
    <property type="project" value="UniProtKB-UniRule"/>
</dbReference>
<dbReference type="GO" id="GO:0019856">
    <property type="term" value="P:pyrimidine nucleobase biosynthetic process"/>
    <property type="evidence" value="ECO:0007669"/>
    <property type="project" value="TreeGrafter"/>
</dbReference>
<dbReference type="CDD" id="cd06223">
    <property type="entry name" value="PRTases_typeI"/>
    <property type="match status" value="1"/>
</dbReference>
<dbReference type="Gene3D" id="3.40.50.2020">
    <property type="match status" value="1"/>
</dbReference>
<dbReference type="HAMAP" id="MF_01208">
    <property type="entry name" value="PyrE"/>
    <property type="match status" value="1"/>
</dbReference>
<dbReference type="InterPro" id="IPR023031">
    <property type="entry name" value="OPRT"/>
</dbReference>
<dbReference type="InterPro" id="IPR004467">
    <property type="entry name" value="Or_phspho_trans_dom"/>
</dbReference>
<dbReference type="InterPro" id="IPR000836">
    <property type="entry name" value="PRibTrfase_dom"/>
</dbReference>
<dbReference type="InterPro" id="IPR029057">
    <property type="entry name" value="PRTase-like"/>
</dbReference>
<dbReference type="NCBIfam" id="TIGR00336">
    <property type="entry name" value="pyrE"/>
    <property type="match status" value="1"/>
</dbReference>
<dbReference type="PANTHER" id="PTHR19278">
    <property type="entry name" value="OROTATE PHOSPHORIBOSYLTRANSFERASE"/>
    <property type="match status" value="1"/>
</dbReference>
<dbReference type="PANTHER" id="PTHR19278:SF9">
    <property type="entry name" value="URIDINE 5'-MONOPHOSPHATE SYNTHASE"/>
    <property type="match status" value="1"/>
</dbReference>
<dbReference type="Pfam" id="PF00156">
    <property type="entry name" value="Pribosyltran"/>
    <property type="match status" value="1"/>
</dbReference>
<dbReference type="SUPFAM" id="SSF53271">
    <property type="entry name" value="PRTase-like"/>
    <property type="match status" value="1"/>
</dbReference>
<dbReference type="PROSITE" id="PS00103">
    <property type="entry name" value="PUR_PYR_PR_TRANSFER"/>
    <property type="match status" value="1"/>
</dbReference>
<protein>
    <recommendedName>
        <fullName evidence="1">Orotate phosphoribosyltransferase</fullName>
        <shortName evidence="1">OPRT</shortName>
        <shortName evidence="1">OPRTase</shortName>
        <ecNumber evidence="1">2.4.2.10</ecNumber>
    </recommendedName>
</protein>
<accession>Q8EUY4</accession>
<keyword id="KW-0328">Glycosyltransferase</keyword>
<keyword id="KW-0460">Magnesium</keyword>
<keyword id="KW-0665">Pyrimidine biosynthesis</keyword>
<keyword id="KW-1185">Reference proteome</keyword>
<keyword id="KW-0808">Transferase</keyword>
<organism>
    <name type="scientific">Malacoplasma penetrans (strain HF-2)</name>
    <name type="common">Mycoplasma penetrans</name>
    <dbReference type="NCBI Taxonomy" id="272633"/>
    <lineage>
        <taxon>Bacteria</taxon>
        <taxon>Bacillati</taxon>
        <taxon>Mycoplasmatota</taxon>
        <taxon>Mycoplasmoidales</taxon>
        <taxon>Mycoplasmoidaceae</taxon>
        <taxon>Malacoplasma</taxon>
    </lineage>
</organism>
<reference key="1">
    <citation type="journal article" date="2002" name="Nucleic Acids Res.">
        <title>The complete genomic sequence of Mycoplasma penetrans, an intracellular bacterial pathogen in humans.</title>
        <authorList>
            <person name="Sasaki Y."/>
            <person name="Ishikawa J."/>
            <person name="Yamashita A."/>
            <person name="Oshima K."/>
            <person name="Kenri T."/>
            <person name="Furuya K."/>
            <person name="Yoshino C."/>
            <person name="Horino A."/>
            <person name="Shiba T."/>
            <person name="Sasaki T."/>
            <person name="Hattori M."/>
        </authorList>
    </citation>
    <scope>NUCLEOTIDE SEQUENCE [LARGE SCALE GENOMIC DNA]</scope>
    <source>
        <strain>HF-2</strain>
    </source>
</reference>
<proteinExistence type="inferred from homology"/>